<sequence length="197" mass="23494">MQNVSEREREEMGIVVNYLFSHNFLLKEFEREKYHLAVRNKDIIKQYLQVIGWDFIVDEKHGCIVIVSPHYEHRLKLKKDETIWLLVLRLIYEEKRSALSISQYPFTTLQEIKGKYETFRLPFVSKTKLRELVQIGKQNQLLRPIDNDIESDDCRFQLFHSCIHVLQQGDLNVLYEKIKSYSEGGDHSEMDEETTIN</sequence>
<gene>
    <name evidence="2" type="primary">jetB</name>
    <name evidence="3" type="ordered locus">BCQ_1016</name>
</gene>
<reference evidence="3" key="1">
    <citation type="journal article" date="2009" name="J. Bacteriol.">
        <title>Complete genome sequence of the extremophilic Bacillus cereus strain Q1 with industrial applications.</title>
        <authorList>
            <person name="Xiong Z."/>
            <person name="Jiang Y."/>
            <person name="Qi D."/>
            <person name="Lu H."/>
            <person name="Yang F."/>
            <person name="Yang J."/>
            <person name="Chen L."/>
            <person name="Sun L."/>
            <person name="Xu X."/>
            <person name="Xue Y."/>
            <person name="Zhu Y."/>
            <person name="Jin Q."/>
        </authorList>
    </citation>
    <scope>NUCLEOTIDE SEQUENCE [LARGE SCALE GENOMIC DNA]</scope>
    <source>
        <strain>Q1</strain>
    </source>
</reference>
<reference key="2">
    <citation type="journal article" date="2018" name="Science">
        <title>Systematic discovery of antiphage defense systems in the microbial pangenome.</title>
        <authorList>
            <person name="Doron S."/>
            <person name="Melamed S."/>
            <person name="Ofir G."/>
            <person name="Leavitt A."/>
            <person name="Lopatina A."/>
            <person name="Keren M."/>
            <person name="Amitai G."/>
            <person name="Sorek R."/>
        </authorList>
    </citation>
    <scope>FUNCTION</scope>
    <scope>DISRUPTION PHENOTYPE</scope>
    <scope>MUTAGENESIS OF 59-GLU-LYS-60</scope>
    <source>
        <strain>Q1</strain>
    </source>
</reference>
<proteinExistence type="evidence at protein level"/>
<evidence type="ECO:0000269" key="1">
    <source>
    </source>
</evidence>
<evidence type="ECO:0000303" key="2">
    <source>
    </source>
</evidence>
<evidence type="ECO:0000312" key="3">
    <source>
        <dbReference type="EMBL" id="ACM11446.1"/>
    </source>
</evidence>
<feature type="chain" id="PRO_0000456346" description="Wadjet protein JetB">
    <location>
        <begin position="1"/>
        <end position="197"/>
    </location>
</feature>
<feature type="mutagenesis site" description="No longer protects against plasmid transformation." evidence="1">
    <original>EK</original>
    <variation>KE</variation>
    <location>
        <begin position="59"/>
        <end position="60"/>
    </location>
</feature>
<comment type="function">
    <text evidence="1">Component of antiplasmid transformation system Wadjet type I, composed of JetA, JetB, JetC and JetD. Expression of Wadjet type I in B.subtilis (strain BEST7003) reduces the transformation efficiency of plasmid pHCMC05.</text>
</comment>
<comment type="disruption phenotype">
    <text evidence="1">When this gene is missing the Wadjet system does not confer plasmid-transformation resistance in B.subtilis.</text>
</comment>
<dbReference type="EMBL" id="CP000227">
    <property type="protein sequence ID" value="ACM11446.1"/>
    <property type="molecule type" value="Genomic_DNA"/>
</dbReference>
<dbReference type="SMR" id="B9IS84"/>
<dbReference type="KEGG" id="bcq:BCQ_1016"/>
<dbReference type="HOGENOM" id="CLU_084423_3_0_9"/>
<dbReference type="Proteomes" id="UP000000441">
    <property type="component" value="Chromosome"/>
</dbReference>
<dbReference type="InterPro" id="IPR025449">
    <property type="entry name" value="JetB"/>
</dbReference>
<dbReference type="Pfam" id="PF13835">
    <property type="entry name" value="DUF4194"/>
    <property type="match status" value="1"/>
</dbReference>
<protein>
    <recommendedName>
        <fullName evidence="2">Wadjet protein JetB</fullName>
    </recommendedName>
</protein>
<name>JETB_BACCQ</name>
<organism>
    <name type="scientific">Bacillus cereus (strain Q1)</name>
    <dbReference type="NCBI Taxonomy" id="361100"/>
    <lineage>
        <taxon>Bacteria</taxon>
        <taxon>Bacillati</taxon>
        <taxon>Bacillota</taxon>
        <taxon>Bacilli</taxon>
        <taxon>Bacillales</taxon>
        <taxon>Bacillaceae</taxon>
        <taxon>Bacillus</taxon>
        <taxon>Bacillus cereus group</taxon>
    </lineage>
</organism>
<accession>B9IS84</accession>